<name>RL17_CLOD6</name>
<reference key="1">
    <citation type="journal article" date="2006" name="Nat. Genet.">
        <title>The multidrug-resistant human pathogen Clostridium difficile has a highly mobile, mosaic genome.</title>
        <authorList>
            <person name="Sebaihia M."/>
            <person name="Wren B.W."/>
            <person name="Mullany P."/>
            <person name="Fairweather N.F."/>
            <person name="Minton N."/>
            <person name="Stabler R."/>
            <person name="Thomson N.R."/>
            <person name="Roberts A.P."/>
            <person name="Cerdeno-Tarraga A.M."/>
            <person name="Wang H."/>
            <person name="Holden M.T.G."/>
            <person name="Wright A."/>
            <person name="Churcher C."/>
            <person name="Quail M.A."/>
            <person name="Baker S."/>
            <person name="Bason N."/>
            <person name="Brooks K."/>
            <person name="Chillingworth T."/>
            <person name="Cronin A."/>
            <person name="Davis P."/>
            <person name="Dowd L."/>
            <person name="Fraser A."/>
            <person name="Feltwell T."/>
            <person name="Hance Z."/>
            <person name="Holroyd S."/>
            <person name="Jagels K."/>
            <person name="Moule S."/>
            <person name="Mungall K."/>
            <person name="Price C."/>
            <person name="Rabbinowitsch E."/>
            <person name="Sharp S."/>
            <person name="Simmonds M."/>
            <person name="Stevens K."/>
            <person name="Unwin L."/>
            <person name="Whithead S."/>
            <person name="Dupuy B."/>
            <person name="Dougan G."/>
            <person name="Barrell B."/>
            <person name="Parkhill J."/>
        </authorList>
    </citation>
    <scope>NUCLEOTIDE SEQUENCE [LARGE SCALE GENOMIC DNA]</scope>
    <source>
        <strain>630</strain>
    </source>
</reference>
<feature type="chain" id="PRO_0000267856" description="Large ribosomal subunit protein bL17">
    <location>
        <begin position="1"/>
        <end position="113"/>
    </location>
</feature>
<keyword id="KW-1185">Reference proteome</keyword>
<keyword id="KW-0687">Ribonucleoprotein</keyword>
<keyword id="KW-0689">Ribosomal protein</keyword>
<protein>
    <recommendedName>
        <fullName evidence="1">Large ribosomal subunit protein bL17</fullName>
    </recommendedName>
    <alternativeName>
        <fullName evidence="2">50S ribosomal protein L17</fullName>
    </alternativeName>
</protein>
<sequence>MAKYRKLGRETAHRNLMLRNLVTCLLRSGRIETTVTRAKETRRMAEKMITLAKRGDLHARRQVLAYVMDETVVNNLFTDLAPKYAERNGGYTRIIKIGPRKGDAAEMAFIELV</sequence>
<accession>Q18CI8</accession>
<gene>
    <name evidence="1" type="primary">rplQ</name>
    <name type="ordered locus">CD630_00990</name>
</gene>
<comment type="subunit">
    <text evidence="1">Part of the 50S ribosomal subunit. Contacts protein L32.</text>
</comment>
<comment type="similarity">
    <text evidence="1">Belongs to the bacterial ribosomal protein bL17 family.</text>
</comment>
<evidence type="ECO:0000255" key="1">
    <source>
        <dbReference type="HAMAP-Rule" id="MF_01368"/>
    </source>
</evidence>
<evidence type="ECO:0000305" key="2"/>
<dbReference type="EMBL" id="AM180355">
    <property type="protein sequence ID" value="CAJ66918.1"/>
    <property type="molecule type" value="Genomic_DNA"/>
</dbReference>
<dbReference type="RefSeq" id="WP_003421117.1">
    <property type="nucleotide sequence ID" value="NZ_JAUPES010000043.1"/>
</dbReference>
<dbReference type="RefSeq" id="YP_001086567.1">
    <property type="nucleotide sequence ID" value="NC_009089.1"/>
</dbReference>
<dbReference type="SMR" id="Q18CI8"/>
<dbReference type="STRING" id="272563.CD630_00990"/>
<dbReference type="EnsemblBacteria" id="CAJ66918">
    <property type="protein sequence ID" value="CAJ66918"/>
    <property type="gene ID" value="CD630_00990"/>
</dbReference>
<dbReference type="GeneID" id="66352601"/>
<dbReference type="KEGG" id="cdf:CD630_00990"/>
<dbReference type="KEGG" id="pdc:CDIF630_00169"/>
<dbReference type="PATRIC" id="fig|272563.120.peg.109"/>
<dbReference type="eggNOG" id="COG0203">
    <property type="taxonomic scope" value="Bacteria"/>
</dbReference>
<dbReference type="OrthoDB" id="9809073at2"/>
<dbReference type="PhylomeDB" id="Q18CI8"/>
<dbReference type="BioCyc" id="PDIF272563:G12WB-157-MONOMER"/>
<dbReference type="Proteomes" id="UP000001978">
    <property type="component" value="Chromosome"/>
</dbReference>
<dbReference type="GO" id="GO:0022625">
    <property type="term" value="C:cytosolic large ribosomal subunit"/>
    <property type="evidence" value="ECO:0007669"/>
    <property type="project" value="TreeGrafter"/>
</dbReference>
<dbReference type="GO" id="GO:0003735">
    <property type="term" value="F:structural constituent of ribosome"/>
    <property type="evidence" value="ECO:0007669"/>
    <property type="project" value="InterPro"/>
</dbReference>
<dbReference type="GO" id="GO:0006412">
    <property type="term" value="P:translation"/>
    <property type="evidence" value="ECO:0007669"/>
    <property type="project" value="UniProtKB-UniRule"/>
</dbReference>
<dbReference type="FunFam" id="3.90.1030.10:FF:000001">
    <property type="entry name" value="50S ribosomal protein L17"/>
    <property type="match status" value="1"/>
</dbReference>
<dbReference type="Gene3D" id="3.90.1030.10">
    <property type="entry name" value="Ribosomal protein L17"/>
    <property type="match status" value="1"/>
</dbReference>
<dbReference type="HAMAP" id="MF_01368">
    <property type="entry name" value="Ribosomal_bL17"/>
    <property type="match status" value="1"/>
</dbReference>
<dbReference type="InterPro" id="IPR000456">
    <property type="entry name" value="Ribosomal_bL17"/>
</dbReference>
<dbReference type="InterPro" id="IPR047859">
    <property type="entry name" value="Ribosomal_bL17_CS"/>
</dbReference>
<dbReference type="InterPro" id="IPR036373">
    <property type="entry name" value="Ribosomal_bL17_sf"/>
</dbReference>
<dbReference type="NCBIfam" id="TIGR00059">
    <property type="entry name" value="L17"/>
    <property type="match status" value="1"/>
</dbReference>
<dbReference type="PANTHER" id="PTHR14413:SF16">
    <property type="entry name" value="LARGE RIBOSOMAL SUBUNIT PROTEIN BL17M"/>
    <property type="match status" value="1"/>
</dbReference>
<dbReference type="PANTHER" id="PTHR14413">
    <property type="entry name" value="RIBOSOMAL PROTEIN L17"/>
    <property type="match status" value="1"/>
</dbReference>
<dbReference type="Pfam" id="PF01196">
    <property type="entry name" value="Ribosomal_L17"/>
    <property type="match status" value="1"/>
</dbReference>
<dbReference type="SUPFAM" id="SSF64263">
    <property type="entry name" value="Prokaryotic ribosomal protein L17"/>
    <property type="match status" value="1"/>
</dbReference>
<dbReference type="PROSITE" id="PS01167">
    <property type="entry name" value="RIBOSOMAL_L17"/>
    <property type="match status" value="1"/>
</dbReference>
<organism>
    <name type="scientific">Clostridioides difficile (strain 630)</name>
    <name type="common">Peptoclostridium difficile</name>
    <dbReference type="NCBI Taxonomy" id="272563"/>
    <lineage>
        <taxon>Bacteria</taxon>
        <taxon>Bacillati</taxon>
        <taxon>Bacillota</taxon>
        <taxon>Clostridia</taxon>
        <taxon>Peptostreptococcales</taxon>
        <taxon>Peptostreptococcaceae</taxon>
        <taxon>Clostridioides</taxon>
    </lineage>
</organism>
<proteinExistence type="inferred from homology"/>